<proteinExistence type="inferred from homology"/>
<dbReference type="EMBL" id="AP009552">
    <property type="protein sequence ID" value="BAG05160.1"/>
    <property type="molecule type" value="Genomic_DNA"/>
</dbReference>
<dbReference type="RefSeq" id="WP_002796120.1">
    <property type="nucleotide sequence ID" value="NC_010296.1"/>
</dbReference>
<dbReference type="SMR" id="B0JYC2"/>
<dbReference type="STRING" id="449447.MAE_53380"/>
<dbReference type="PaxDb" id="449447-MAE_53380"/>
<dbReference type="EnsemblBacteria" id="BAG05160">
    <property type="protein sequence ID" value="BAG05160"/>
    <property type="gene ID" value="MAE_53380"/>
</dbReference>
<dbReference type="GeneID" id="66705746"/>
<dbReference type="KEGG" id="mar:MAE_53380"/>
<dbReference type="eggNOG" id="COG0199">
    <property type="taxonomic scope" value="Bacteria"/>
</dbReference>
<dbReference type="HOGENOM" id="CLU_139869_0_1_3"/>
<dbReference type="BioCyc" id="MAER449447:MAE_RS23210-MONOMER"/>
<dbReference type="Proteomes" id="UP000001510">
    <property type="component" value="Chromosome"/>
</dbReference>
<dbReference type="GO" id="GO:0005737">
    <property type="term" value="C:cytoplasm"/>
    <property type="evidence" value="ECO:0007669"/>
    <property type="project" value="UniProtKB-ARBA"/>
</dbReference>
<dbReference type="GO" id="GO:0015935">
    <property type="term" value="C:small ribosomal subunit"/>
    <property type="evidence" value="ECO:0007669"/>
    <property type="project" value="TreeGrafter"/>
</dbReference>
<dbReference type="GO" id="GO:0019843">
    <property type="term" value="F:rRNA binding"/>
    <property type="evidence" value="ECO:0007669"/>
    <property type="project" value="UniProtKB-UniRule"/>
</dbReference>
<dbReference type="GO" id="GO:0003735">
    <property type="term" value="F:structural constituent of ribosome"/>
    <property type="evidence" value="ECO:0007669"/>
    <property type="project" value="InterPro"/>
</dbReference>
<dbReference type="GO" id="GO:0006412">
    <property type="term" value="P:translation"/>
    <property type="evidence" value="ECO:0007669"/>
    <property type="project" value="UniProtKB-UniRule"/>
</dbReference>
<dbReference type="FunFam" id="1.10.287.1480:FF:000001">
    <property type="entry name" value="30S ribosomal protein S14"/>
    <property type="match status" value="1"/>
</dbReference>
<dbReference type="Gene3D" id="1.10.287.1480">
    <property type="match status" value="1"/>
</dbReference>
<dbReference type="HAMAP" id="MF_00537">
    <property type="entry name" value="Ribosomal_uS14_1"/>
    <property type="match status" value="1"/>
</dbReference>
<dbReference type="InterPro" id="IPR001209">
    <property type="entry name" value="Ribosomal_uS14"/>
</dbReference>
<dbReference type="InterPro" id="IPR023036">
    <property type="entry name" value="Ribosomal_uS14_bac/plastid"/>
</dbReference>
<dbReference type="InterPro" id="IPR018271">
    <property type="entry name" value="Ribosomal_uS14_CS"/>
</dbReference>
<dbReference type="NCBIfam" id="NF006477">
    <property type="entry name" value="PRK08881.1"/>
    <property type="match status" value="1"/>
</dbReference>
<dbReference type="PANTHER" id="PTHR19836">
    <property type="entry name" value="30S RIBOSOMAL PROTEIN S14"/>
    <property type="match status" value="1"/>
</dbReference>
<dbReference type="PANTHER" id="PTHR19836:SF19">
    <property type="entry name" value="SMALL RIBOSOMAL SUBUNIT PROTEIN US14M"/>
    <property type="match status" value="1"/>
</dbReference>
<dbReference type="Pfam" id="PF00253">
    <property type="entry name" value="Ribosomal_S14"/>
    <property type="match status" value="1"/>
</dbReference>
<dbReference type="SUPFAM" id="SSF57716">
    <property type="entry name" value="Glucocorticoid receptor-like (DNA-binding domain)"/>
    <property type="match status" value="1"/>
</dbReference>
<dbReference type="PROSITE" id="PS00527">
    <property type="entry name" value="RIBOSOMAL_S14"/>
    <property type="match status" value="1"/>
</dbReference>
<accession>B0JYC2</accession>
<sequence length="100" mass="11967">MAKKSMVEREKKRARLRQKYEAKRTELKEQFRTAEDFEEKLAIHQKLQELPRNSAPSRHRNRCLTTGRPRGYYRDFGLSRNVLREWAHQGLLPGVVKSSW</sequence>
<reference key="1">
    <citation type="journal article" date="2007" name="DNA Res.">
        <title>Complete genomic structure of the bloom-forming toxic cyanobacterium Microcystis aeruginosa NIES-843.</title>
        <authorList>
            <person name="Kaneko T."/>
            <person name="Nakajima N."/>
            <person name="Okamoto S."/>
            <person name="Suzuki I."/>
            <person name="Tanabe Y."/>
            <person name="Tamaoki M."/>
            <person name="Nakamura Y."/>
            <person name="Kasai F."/>
            <person name="Watanabe A."/>
            <person name="Kawashima K."/>
            <person name="Kishida Y."/>
            <person name="Ono A."/>
            <person name="Shimizu Y."/>
            <person name="Takahashi C."/>
            <person name="Minami C."/>
            <person name="Fujishiro T."/>
            <person name="Kohara M."/>
            <person name="Katoh M."/>
            <person name="Nakazaki N."/>
            <person name="Nakayama S."/>
            <person name="Yamada M."/>
            <person name="Tabata S."/>
            <person name="Watanabe M.M."/>
        </authorList>
    </citation>
    <scope>NUCLEOTIDE SEQUENCE [LARGE SCALE GENOMIC DNA]</scope>
    <source>
        <strain>NIES-843 / IAM M-247</strain>
    </source>
</reference>
<gene>
    <name evidence="1" type="primary">rpsN</name>
    <name evidence="1" type="synonym">rps14</name>
    <name type="ordered locus">MAE_53380</name>
</gene>
<protein>
    <recommendedName>
        <fullName evidence="1">Small ribosomal subunit protein uS14</fullName>
    </recommendedName>
    <alternativeName>
        <fullName evidence="2">30S ribosomal protein S14</fullName>
    </alternativeName>
</protein>
<comment type="function">
    <text evidence="1">Binds 16S rRNA, required for the assembly of 30S particles and may also be responsible for determining the conformation of the 16S rRNA at the A site.</text>
</comment>
<comment type="subunit">
    <text evidence="1">Part of the 30S ribosomal subunit. Contacts proteins S3 and S10.</text>
</comment>
<comment type="similarity">
    <text evidence="1">Belongs to the universal ribosomal protein uS14 family.</text>
</comment>
<keyword id="KW-0687">Ribonucleoprotein</keyword>
<keyword id="KW-0689">Ribosomal protein</keyword>
<keyword id="KW-0694">RNA-binding</keyword>
<keyword id="KW-0699">rRNA-binding</keyword>
<name>RS14_MICAN</name>
<organism>
    <name type="scientific">Microcystis aeruginosa (strain NIES-843 / IAM M-2473)</name>
    <dbReference type="NCBI Taxonomy" id="449447"/>
    <lineage>
        <taxon>Bacteria</taxon>
        <taxon>Bacillati</taxon>
        <taxon>Cyanobacteriota</taxon>
        <taxon>Cyanophyceae</taxon>
        <taxon>Oscillatoriophycideae</taxon>
        <taxon>Chroococcales</taxon>
        <taxon>Microcystaceae</taxon>
        <taxon>Microcystis</taxon>
    </lineage>
</organism>
<feature type="chain" id="PRO_1000128451" description="Small ribosomal subunit protein uS14">
    <location>
        <begin position="1"/>
        <end position="100"/>
    </location>
</feature>
<evidence type="ECO:0000255" key="1">
    <source>
        <dbReference type="HAMAP-Rule" id="MF_00537"/>
    </source>
</evidence>
<evidence type="ECO:0000305" key="2"/>